<evidence type="ECO:0000255" key="1">
    <source>
        <dbReference type="HAMAP-Rule" id="MF_01855"/>
    </source>
</evidence>
<evidence type="ECO:0000305" key="2"/>
<name>F16PA_YERPB</name>
<organism>
    <name type="scientific">Yersinia pseudotuberculosis serotype IB (strain PB1/+)</name>
    <dbReference type="NCBI Taxonomy" id="502801"/>
    <lineage>
        <taxon>Bacteria</taxon>
        <taxon>Pseudomonadati</taxon>
        <taxon>Pseudomonadota</taxon>
        <taxon>Gammaproteobacteria</taxon>
        <taxon>Enterobacterales</taxon>
        <taxon>Yersiniaceae</taxon>
        <taxon>Yersinia</taxon>
    </lineage>
</organism>
<proteinExistence type="inferred from homology"/>
<protein>
    <recommendedName>
        <fullName evidence="1">Fructose-1,6-bisphosphatase class 1</fullName>
        <shortName evidence="1">FBPase class 1</shortName>
        <ecNumber evidence="1">3.1.3.11</ecNumber>
    </recommendedName>
    <alternativeName>
        <fullName evidence="1">D-fructose-1,6-bisphosphate 1-phosphohydrolase class 1</fullName>
    </alternativeName>
</protein>
<sequence length="337" mass="36966">MKTLGEFIVEKQLDFSHATGELTALLSAIKLGAKIIHRDINKAGLVDILGASGVSNIQGEDQMKLDLFANEKLKAALKARGEVAGIASEEEDDIVIFDGGRAENAKYVVLMDPLDGSSNIDVNVSVGTIFSIYRRITPFGTPITEEDFLQPGTKQVAAGYVVYGSSTMLVYTTGYGVHAFTYDPSLGVFCLSHEKVRYPATGCMYSINEGNYIKFPLGVKKYIKYCQEQDEATKRPYTSRYIGSLVADFHRNLLKGGIYIYPSTASHPQGKLRLLYECNPMAFLAEQAGGKATDGVNRILDIVPEKLHQRAPFFVGTKSMVEDAEGFIAKFPDEEAK</sequence>
<accession>B2K2N1</accession>
<reference key="1">
    <citation type="submission" date="2008-04" db="EMBL/GenBank/DDBJ databases">
        <title>Complete sequence of Yersinia pseudotuberculosis PB1/+.</title>
        <authorList>
            <person name="Copeland A."/>
            <person name="Lucas S."/>
            <person name="Lapidus A."/>
            <person name="Glavina del Rio T."/>
            <person name="Dalin E."/>
            <person name="Tice H."/>
            <person name="Bruce D."/>
            <person name="Goodwin L."/>
            <person name="Pitluck S."/>
            <person name="Munk A.C."/>
            <person name="Brettin T."/>
            <person name="Detter J.C."/>
            <person name="Han C."/>
            <person name="Tapia R."/>
            <person name="Schmutz J."/>
            <person name="Larimer F."/>
            <person name="Land M."/>
            <person name="Hauser L."/>
            <person name="Challacombe J.F."/>
            <person name="Green L."/>
            <person name="Lindler L.E."/>
            <person name="Nikolich M.P."/>
            <person name="Richardson P."/>
        </authorList>
    </citation>
    <scope>NUCLEOTIDE SEQUENCE [LARGE SCALE GENOMIC DNA]</scope>
    <source>
        <strain>PB1/+</strain>
    </source>
</reference>
<dbReference type="EC" id="3.1.3.11" evidence="1"/>
<dbReference type="EMBL" id="CP001048">
    <property type="protein sequence ID" value="ACC87472.1"/>
    <property type="status" value="ALT_INIT"/>
    <property type="molecule type" value="Genomic_DNA"/>
</dbReference>
<dbReference type="RefSeq" id="WP_011191626.1">
    <property type="nucleotide sequence ID" value="NZ_CP009780.1"/>
</dbReference>
<dbReference type="SMR" id="B2K2N1"/>
<dbReference type="GeneID" id="96663958"/>
<dbReference type="KEGG" id="ypb:YPTS_0486"/>
<dbReference type="PATRIC" id="fig|502801.10.peg.4159"/>
<dbReference type="UniPathway" id="UPA00138"/>
<dbReference type="GO" id="GO:0005829">
    <property type="term" value="C:cytosol"/>
    <property type="evidence" value="ECO:0007669"/>
    <property type="project" value="TreeGrafter"/>
</dbReference>
<dbReference type="GO" id="GO:0042132">
    <property type="term" value="F:fructose 1,6-bisphosphate 1-phosphatase activity"/>
    <property type="evidence" value="ECO:0007669"/>
    <property type="project" value="UniProtKB-UniRule"/>
</dbReference>
<dbReference type="GO" id="GO:0000287">
    <property type="term" value="F:magnesium ion binding"/>
    <property type="evidence" value="ECO:0007669"/>
    <property type="project" value="UniProtKB-UniRule"/>
</dbReference>
<dbReference type="GO" id="GO:0030388">
    <property type="term" value="P:fructose 1,6-bisphosphate metabolic process"/>
    <property type="evidence" value="ECO:0007669"/>
    <property type="project" value="TreeGrafter"/>
</dbReference>
<dbReference type="GO" id="GO:0006002">
    <property type="term" value="P:fructose 6-phosphate metabolic process"/>
    <property type="evidence" value="ECO:0007669"/>
    <property type="project" value="TreeGrafter"/>
</dbReference>
<dbReference type="GO" id="GO:0006000">
    <property type="term" value="P:fructose metabolic process"/>
    <property type="evidence" value="ECO:0007669"/>
    <property type="project" value="TreeGrafter"/>
</dbReference>
<dbReference type="GO" id="GO:0006094">
    <property type="term" value="P:gluconeogenesis"/>
    <property type="evidence" value="ECO:0007669"/>
    <property type="project" value="UniProtKB-UniRule"/>
</dbReference>
<dbReference type="GO" id="GO:0005986">
    <property type="term" value="P:sucrose biosynthetic process"/>
    <property type="evidence" value="ECO:0007669"/>
    <property type="project" value="TreeGrafter"/>
</dbReference>
<dbReference type="CDD" id="cd00354">
    <property type="entry name" value="FBPase"/>
    <property type="match status" value="1"/>
</dbReference>
<dbReference type="FunFam" id="3.30.540.10:FF:000002">
    <property type="entry name" value="Fructose-1,6-bisphosphatase class 1"/>
    <property type="match status" value="1"/>
</dbReference>
<dbReference type="FunFam" id="3.40.190.80:FF:000001">
    <property type="entry name" value="Fructose-1,6-bisphosphatase class 1"/>
    <property type="match status" value="1"/>
</dbReference>
<dbReference type="Gene3D" id="3.40.190.80">
    <property type="match status" value="1"/>
</dbReference>
<dbReference type="Gene3D" id="3.30.540.10">
    <property type="entry name" value="Fructose-1,6-Bisphosphatase, subunit A, domain 1"/>
    <property type="match status" value="1"/>
</dbReference>
<dbReference type="HAMAP" id="MF_01855">
    <property type="entry name" value="FBPase_class1"/>
    <property type="match status" value="1"/>
</dbReference>
<dbReference type="InterPro" id="IPR044015">
    <property type="entry name" value="FBPase_C_dom"/>
</dbReference>
<dbReference type="InterPro" id="IPR000146">
    <property type="entry name" value="FBPase_class-1"/>
</dbReference>
<dbReference type="InterPro" id="IPR033391">
    <property type="entry name" value="FBPase_N"/>
</dbReference>
<dbReference type="InterPro" id="IPR028343">
    <property type="entry name" value="FBPtase"/>
</dbReference>
<dbReference type="InterPro" id="IPR020548">
    <property type="entry name" value="Fructose_bisphosphatase_AS"/>
</dbReference>
<dbReference type="NCBIfam" id="NF006778">
    <property type="entry name" value="PRK09293.1-1"/>
    <property type="match status" value="1"/>
</dbReference>
<dbReference type="PANTHER" id="PTHR11556">
    <property type="entry name" value="FRUCTOSE-1,6-BISPHOSPHATASE-RELATED"/>
    <property type="match status" value="1"/>
</dbReference>
<dbReference type="PANTHER" id="PTHR11556:SF35">
    <property type="entry name" value="SEDOHEPTULOSE-1,7-BISPHOSPHATASE, CHLOROPLASTIC"/>
    <property type="match status" value="1"/>
</dbReference>
<dbReference type="Pfam" id="PF00316">
    <property type="entry name" value="FBPase"/>
    <property type="match status" value="1"/>
</dbReference>
<dbReference type="Pfam" id="PF18913">
    <property type="entry name" value="FBPase_C"/>
    <property type="match status" value="1"/>
</dbReference>
<dbReference type="PIRSF" id="PIRSF500210">
    <property type="entry name" value="FBPtase"/>
    <property type="match status" value="1"/>
</dbReference>
<dbReference type="PIRSF" id="PIRSF000904">
    <property type="entry name" value="FBPtase_SBPase"/>
    <property type="match status" value="1"/>
</dbReference>
<dbReference type="PRINTS" id="PR00115">
    <property type="entry name" value="F16BPHPHTASE"/>
</dbReference>
<dbReference type="SUPFAM" id="SSF56655">
    <property type="entry name" value="Carbohydrate phosphatase"/>
    <property type="match status" value="1"/>
</dbReference>
<dbReference type="PROSITE" id="PS00124">
    <property type="entry name" value="FBPASE"/>
    <property type="match status" value="1"/>
</dbReference>
<feature type="chain" id="PRO_0000364765" description="Fructose-1,6-bisphosphatase class 1">
    <location>
        <begin position="1"/>
        <end position="337"/>
    </location>
</feature>
<feature type="binding site" evidence="1">
    <location>
        <position position="89"/>
    </location>
    <ligand>
        <name>Mg(2+)</name>
        <dbReference type="ChEBI" id="CHEBI:18420"/>
        <label>1</label>
    </ligand>
</feature>
<feature type="binding site" evidence="1">
    <location>
        <position position="112"/>
    </location>
    <ligand>
        <name>Mg(2+)</name>
        <dbReference type="ChEBI" id="CHEBI:18420"/>
        <label>1</label>
    </ligand>
</feature>
<feature type="binding site" evidence="1">
    <location>
        <position position="112"/>
    </location>
    <ligand>
        <name>Mg(2+)</name>
        <dbReference type="ChEBI" id="CHEBI:18420"/>
        <label>2</label>
    </ligand>
</feature>
<feature type="binding site" evidence="1">
    <location>
        <position position="114"/>
    </location>
    <ligand>
        <name>Mg(2+)</name>
        <dbReference type="ChEBI" id="CHEBI:18420"/>
        <label>1</label>
    </ligand>
</feature>
<feature type="binding site" evidence="1">
    <location>
        <begin position="115"/>
        <end position="118"/>
    </location>
    <ligand>
        <name>substrate</name>
    </ligand>
</feature>
<feature type="binding site" evidence="1">
    <location>
        <position position="115"/>
    </location>
    <ligand>
        <name>Mg(2+)</name>
        <dbReference type="ChEBI" id="CHEBI:18420"/>
        <label>2</label>
    </ligand>
</feature>
<feature type="binding site" evidence="1">
    <location>
        <position position="208"/>
    </location>
    <ligand>
        <name>substrate</name>
    </ligand>
</feature>
<feature type="binding site" evidence="1">
    <location>
        <position position="241"/>
    </location>
    <ligand>
        <name>substrate</name>
    </ligand>
</feature>
<feature type="binding site" evidence="1">
    <location>
        <position position="271"/>
    </location>
    <ligand>
        <name>substrate</name>
    </ligand>
</feature>
<feature type="binding site" evidence="1">
    <location>
        <position position="277"/>
    </location>
    <ligand>
        <name>Mg(2+)</name>
        <dbReference type="ChEBI" id="CHEBI:18420"/>
        <label>2</label>
    </ligand>
</feature>
<comment type="catalytic activity">
    <reaction evidence="1">
        <text>beta-D-fructose 1,6-bisphosphate + H2O = beta-D-fructose 6-phosphate + phosphate</text>
        <dbReference type="Rhea" id="RHEA:11064"/>
        <dbReference type="ChEBI" id="CHEBI:15377"/>
        <dbReference type="ChEBI" id="CHEBI:32966"/>
        <dbReference type="ChEBI" id="CHEBI:43474"/>
        <dbReference type="ChEBI" id="CHEBI:57634"/>
        <dbReference type="EC" id="3.1.3.11"/>
    </reaction>
</comment>
<comment type="cofactor">
    <cofactor evidence="1">
        <name>Mg(2+)</name>
        <dbReference type="ChEBI" id="CHEBI:18420"/>
    </cofactor>
    <text evidence="1">Binds 2 magnesium ions per subunit.</text>
</comment>
<comment type="pathway">
    <text evidence="1">Carbohydrate biosynthesis; gluconeogenesis.</text>
</comment>
<comment type="subunit">
    <text evidence="1">Homotetramer.</text>
</comment>
<comment type="subcellular location">
    <subcellularLocation>
        <location evidence="1">Cytoplasm</location>
    </subcellularLocation>
</comment>
<comment type="similarity">
    <text evidence="1">Belongs to the FBPase class 1 family.</text>
</comment>
<comment type="sequence caution" evidence="2">
    <conflict type="erroneous initiation">
        <sequence resource="EMBL-CDS" id="ACC87472"/>
    </conflict>
</comment>
<keyword id="KW-0119">Carbohydrate metabolism</keyword>
<keyword id="KW-0963">Cytoplasm</keyword>
<keyword id="KW-0378">Hydrolase</keyword>
<keyword id="KW-0460">Magnesium</keyword>
<keyword id="KW-0479">Metal-binding</keyword>
<gene>
    <name evidence="1" type="primary">fbp</name>
    <name type="ordered locus">YPTS_0486</name>
</gene>